<feature type="chain" id="PRO_1000138866" description="Carbamoyl phosphate synthase small chain">
    <location>
        <begin position="1"/>
        <end position="390"/>
    </location>
</feature>
<feature type="domain" description="Glutamine amidotransferase type-1" evidence="1">
    <location>
        <begin position="202"/>
        <end position="390"/>
    </location>
</feature>
<feature type="region of interest" description="CPSase" evidence="1">
    <location>
        <begin position="1"/>
        <end position="198"/>
    </location>
</feature>
<feature type="active site" description="Nucleophile" evidence="1">
    <location>
        <position position="279"/>
    </location>
</feature>
<feature type="active site" evidence="1">
    <location>
        <position position="363"/>
    </location>
</feature>
<feature type="active site" evidence="1">
    <location>
        <position position="365"/>
    </location>
</feature>
<feature type="binding site" evidence="1">
    <location>
        <position position="53"/>
    </location>
    <ligand>
        <name>L-glutamine</name>
        <dbReference type="ChEBI" id="CHEBI:58359"/>
    </ligand>
</feature>
<feature type="binding site" evidence="1">
    <location>
        <position position="250"/>
    </location>
    <ligand>
        <name>L-glutamine</name>
        <dbReference type="ChEBI" id="CHEBI:58359"/>
    </ligand>
</feature>
<feature type="binding site" evidence="1">
    <location>
        <position position="252"/>
    </location>
    <ligand>
        <name>L-glutamine</name>
        <dbReference type="ChEBI" id="CHEBI:58359"/>
    </ligand>
</feature>
<feature type="binding site" evidence="1">
    <location>
        <position position="280"/>
    </location>
    <ligand>
        <name>L-glutamine</name>
        <dbReference type="ChEBI" id="CHEBI:58359"/>
    </ligand>
</feature>
<feature type="binding site" evidence="1">
    <location>
        <position position="283"/>
    </location>
    <ligand>
        <name>L-glutamine</name>
        <dbReference type="ChEBI" id="CHEBI:58359"/>
    </ligand>
</feature>
<feature type="binding site" evidence="1">
    <location>
        <position position="321"/>
    </location>
    <ligand>
        <name>L-glutamine</name>
        <dbReference type="ChEBI" id="CHEBI:58359"/>
    </ligand>
</feature>
<feature type="binding site" evidence="1">
    <location>
        <position position="323"/>
    </location>
    <ligand>
        <name>L-glutamine</name>
        <dbReference type="ChEBI" id="CHEBI:58359"/>
    </ligand>
</feature>
<feature type="binding site" evidence="1">
    <location>
        <position position="324"/>
    </location>
    <ligand>
        <name>L-glutamine</name>
        <dbReference type="ChEBI" id="CHEBI:58359"/>
    </ligand>
</feature>
<gene>
    <name evidence="1" type="primary">carA</name>
    <name type="ordered locus">Mmar10_2132</name>
</gene>
<comment type="function">
    <text evidence="1">Small subunit of the glutamine-dependent carbamoyl phosphate synthetase (CPSase). CPSase catalyzes the formation of carbamoyl phosphate from the ammonia moiety of glutamine, carbonate, and phosphate donated by ATP, constituting the first step of 2 biosynthetic pathways, one leading to arginine and/or urea and the other to pyrimidine nucleotides. The small subunit (glutamine amidotransferase) binds and cleaves glutamine to supply the large subunit with the substrate ammonia.</text>
</comment>
<comment type="catalytic activity">
    <reaction evidence="1">
        <text>hydrogencarbonate + L-glutamine + 2 ATP + H2O = carbamoyl phosphate + L-glutamate + 2 ADP + phosphate + 2 H(+)</text>
        <dbReference type="Rhea" id="RHEA:18633"/>
        <dbReference type="ChEBI" id="CHEBI:15377"/>
        <dbReference type="ChEBI" id="CHEBI:15378"/>
        <dbReference type="ChEBI" id="CHEBI:17544"/>
        <dbReference type="ChEBI" id="CHEBI:29985"/>
        <dbReference type="ChEBI" id="CHEBI:30616"/>
        <dbReference type="ChEBI" id="CHEBI:43474"/>
        <dbReference type="ChEBI" id="CHEBI:58228"/>
        <dbReference type="ChEBI" id="CHEBI:58359"/>
        <dbReference type="ChEBI" id="CHEBI:456216"/>
        <dbReference type="EC" id="6.3.5.5"/>
    </reaction>
</comment>
<comment type="catalytic activity">
    <molecule>Carbamoyl phosphate synthase small chain</molecule>
    <reaction evidence="1">
        <text>L-glutamine + H2O = L-glutamate + NH4(+)</text>
        <dbReference type="Rhea" id="RHEA:15889"/>
        <dbReference type="ChEBI" id="CHEBI:15377"/>
        <dbReference type="ChEBI" id="CHEBI:28938"/>
        <dbReference type="ChEBI" id="CHEBI:29985"/>
        <dbReference type="ChEBI" id="CHEBI:58359"/>
    </reaction>
</comment>
<comment type="pathway">
    <text evidence="1">Amino-acid biosynthesis; L-arginine biosynthesis; carbamoyl phosphate from bicarbonate: step 1/1.</text>
</comment>
<comment type="pathway">
    <text evidence="1">Pyrimidine metabolism; UMP biosynthesis via de novo pathway; (S)-dihydroorotate from bicarbonate: step 1/3.</text>
</comment>
<comment type="subunit">
    <text evidence="1">Composed of two chains; the small (or glutamine) chain promotes the hydrolysis of glutamine to ammonia, which is used by the large (or ammonia) chain to synthesize carbamoyl phosphate. Tetramer of heterodimers (alpha,beta)4.</text>
</comment>
<comment type="similarity">
    <text evidence="1">Belongs to the CarA family.</text>
</comment>
<dbReference type="EC" id="6.3.5.5" evidence="1"/>
<dbReference type="EMBL" id="CP000449">
    <property type="protein sequence ID" value="ABI66424.1"/>
    <property type="molecule type" value="Genomic_DNA"/>
</dbReference>
<dbReference type="RefSeq" id="WP_011644069.1">
    <property type="nucleotide sequence ID" value="NC_008347.1"/>
</dbReference>
<dbReference type="SMR" id="Q0AMR3"/>
<dbReference type="STRING" id="394221.Mmar10_2132"/>
<dbReference type="KEGG" id="mmr:Mmar10_2132"/>
<dbReference type="eggNOG" id="COG0505">
    <property type="taxonomic scope" value="Bacteria"/>
</dbReference>
<dbReference type="HOGENOM" id="CLU_035901_2_2_5"/>
<dbReference type="OrthoDB" id="9804328at2"/>
<dbReference type="UniPathway" id="UPA00068">
    <property type="reaction ID" value="UER00171"/>
</dbReference>
<dbReference type="UniPathway" id="UPA00070">
    <property type="reaction ID" value="UER00115"/>
</dbReference>
<dbReference type="Proteomes" id="UP000001964">
    <property type="component" value="Chromosome"/>
</dbReference>
<dbReference type="GO" id="GO:0005524">
    <property type="term" value="F:ATP binding"/>
    <property type="evidence" value="ECO:0007669"/>
    <property type="project" value="UniProtKB-UniRule"/>
</dbReference>
<dbReference type="GO" id="GO:0004088">
    <property type="term" value="F:carbamoyl-phosphate synthase (glutamine-hydrolyzing) activity"/>
    <property type="evidence" value="ECO:0007669"/>
    <property type="project" value="UniProtKB-UniRule"/>
</dbReference>
<dbReference type="GO" id="GO:0004359">
    <property type="term" value="F:glutaminase activity"/>
    <property type="evidence" value="ECO:0007669"/>
    <property type="project" value="RHEA"/>
</dbReference>
<dbReference type="GO" id="GO:0006207">
    <property type="term" value="P:'de novo' pyrimidine nucleobase biosynthetic process"/>
    <property type="evidence" value="ECO:0007669"/>
    <property type="project" value="InterPro"/>
</dbReference>
<dbReference type="GO" id="GO:0044205">
    <property type="term" value="P:'de novo' UMP biosynthetic process"/>
    <property type="evidence" value="ECO:0007669"/>
    <property type="project" value="UniProtKB-UniRule"/>
</dbReference>
<dbReference type="GO" id="GO:0006541">
    <property type="term" value="P:glutamine metabolic process"/>
    <property type="evidence" value="ECO:0007669"/>
    <property type="project" value="InterPro"/>
</dbReference>
<dbReference type="GO" id="GO:0006526">
    <property type="term" value="P:L-arginine biosynthetic process"/>
    <property type="evidence" value="ECO:0007669"/>
    <property type="project" value="UniProtKB-UniRule"/>
</dbReference>
<dbReference type="CDD" id="cd01744">
    <property type="entry name" value="GATase1_CPSase"/>
    <property type="match status" value="1"/>
</dbReference>
<dbReference type="Gene3D" id="3.40.50.880">
    <property type="match status" value="1"/>
</dbReference>
<dbReference type="Gene3D" id="3.50.30.20">
    <property type="entry name" value="Carbamoyl-phosphate synthase small subunit, N-terminal domain"/>
    <property type="match status" value="1"/>
</dbReference>
<dbReference type="HAMAP" id="MF_01209">
    <property type="entry name" value="CPSase_S_chain"/>
    <property type="match status" value="1"/>
</dbReference>
<dbReference type="InterPro" id="IPR050472">
    <property type="entry name" value="Anth_synth/Amidotransfase"/>
</dbReference>
<dbReference type="InterPro" id="IPR006274">
    <property type="entry name" value="CarbamoylP_synth_ssu"/>
</dbReference>
<dbReference type="InterPro" id="IPR002474">
    <property type="entry name" value="CarbamoylP_synth_ssu_N"/>
</dbReference>
<dbReference type="InterPro" id="IPR036480">
    <property type="entry name" value="CarbP_synth_ssu_N_sf"/>
</dbReference>
<dbReference type="InterPro" id="IPR029062">
    <property type="entry name" value="Class_I_gatase-like"/>
</dbReference>
<dbReference type="InterPro" id="IPR035686">
    <property type="entry name" value="CPSase_GATase1"/>
</dbReference>
<dbReference type="InterPro" id="IPR017926">
    <property type="entry name" value="GATASE"/>
</dbReference>
<dbReference type="NCBIfam" id="TIGR01368">
    <property type="entry name" value="CPSaseIIsmall"/>
    <property type="match status" value="1"/>
</dbReference>
<dbReference type="NCBIfam" id="NF009475">
    <property type="entry name" value="PRK12838.1"/>
    <property type="match status" value="1"/>
</dbReference>
<dbReference type="PANTHER" id="PTHR43418:SF7">
    <property type="entry name" value="CARBAMOYL-PHOSPHATE SYNTHASE SMALL CHAIN"/>
    <property type="match status" value="1"/>
</dbReference>
<dbReference type="PANTHER" id="PTHR43418">
    <property type="entry name" value="MULTIFUNCTIONAL TRYPTOPHAN BIOSYNTHESIS PROTEIN-RELATED"/>
    <property type="match status" value="1"/>
</dbReference>
<dbReference type="Pfam" id="PF00988">
    <property type="entry name" value="CPSase_sm_chain"/>
    <property type="match status" value="1"/>
</dbReference>
<dbReference type="Pfam" id="PF00117">
    <property type="entry name" value="GATase"/>
    <property type="match status" value="1"/>
</dbReference>
<dbReference type="PRINTS" id="PR00097">
    <property type="entry name" value="ANTSNTHASEII"/>
</dbReference>
<dbReference type="PRINTS" id="PR00099">
    <property type="entry name" value="CPSGATASE"/>
</dbReference>
<dbReference type="PRINTS" id="PR00096">
    <property type="entry name" value="GATASE"/>
</dbReference>
<dbReference type="SMART" id="SM01097">
    <property type="entry name" value="CPSase_sm_chain"/>
    <property type="match status" value="1"/>
</dbReference>
<dbReference type="SUPFAM" id="SSF52021">
    <property type="entry name" value="Carbamoyl phosphate synthetase, small subunit N-terminal domain"/>
    <property type="match status" value="1"/>
</dbReference>
<dbReference type="SUPFAM" id="SSF52317">
    <property type="entry name" value="Class I glutamine amidotransferase-like"/>
    <property type="match status" value="1"/>
</dbReference>
<dbReference type="PROSITE" id="PS51273">
    <property type="entry name" value="GATASE_TYPE_1"/>
    <property type="match status" value="1"/>
</dbReference>
<protein>
    <recommendedName>
        <fullName evidence="1">Carbamoyl phosphate synthase small chain</fullName>
        <ecNumber evidence="1">6.3.5.5</ecNumber>
    </recommendedName>
    <alternativeName>
        <fullName evidence="1">Carbamoyl phosphate synthetase glutamine chain</fullName>
    </alternativeName>
</protein>
<proteinExistence type="inferred from homology"/>
<organism>
    <name type="scientific">Maricaulis maris (strain MCS10)</name>
    <name type="common">Caulobacter maris</name>
    <dbReference type="NCBI Taxonomy" id="394221"/>
    <lineage>
        <taxon>Bacteria</taxon>
        <taxon>Pseudomonadati</taxon>
        <taxon>Pseudomonadota</taxon>
        <taxon>Alphaproteobacteria</taxon>
        <taxon>Maricaulales</taxon>
        <taxon>Maricaulaceae</taxon>
        <taxon>Maricaulis</taxon>
    </lineage>
</organism>
<evidence type="ECO:0000255" key="1">
    <source>
        <dbReference type="HAMAP-Rule" id="MF_01209"/>
    </source>
</evidence>
<accession>Q0AMR3</accession>
<sequence length="390" mass="40256">MTSTPTPTPTGALALADGSVFLGHGTGATGIALGEVCFNTAMTGHQEILADPSYAGQVVCFTFPHVGNVGANGEDEEAASPQARKAAVGMIARAKITPPASWRADTTFEEWLCTRGIVALTGIDTRALTRKIREGGMQMCAIAHDAAGNIDIEALKAAAAGAPTMEGRELAADVARTEGGDWTEGNWTLGEGYAVGPEDGPRVVVLDYGVKANILRLLTGAGARVAVLPGKASIDDIKALNPDGVVVSNGPGDPAETGKYALPTIKAVLDANIPTLGICLGHQMLALAIGAKTAKMPQGHHGANHPVKNHETGQVEIVSMNHGFAVDGTTLPANAAETHVSLFDGSNSGFKLTDKPVWAVQHHPEASPGPQDSFGVFDRFVGELKGRVEA</sequence>
<reference key="1">
    <citation type="submission" date="2006-08" db="EMBL/GenBank/DDBJ databases">
        <title>Complete sequence of Maricaulis maris MCS10.</title>
        <authorList>
            <consortium name="US DOE Joint Genome Institute"/>
            <person name="Copeland A."/>
            <person name="Lucas S."/>
            <person name="Lapidus A."/>
            <person name="Barry K."/>
            <person name="Detter J.C."/>
            <person name="Glavina del Rio T."/>
            <person name="Hammon N."/>
            <person name="Israni S."/>
            <person name="Dalin E."/>
            <person name="Tice H."/>
            <person name="Pitluck S."/>
            <person name="Saunders E."/>
            <person name="Brettin T."/>
            <person name="Bruce D."/>
            <person name="Han C."/>
            <person name="Tapia R."/>
            <person name="Gilna P."/>
            <person name="Schmutz J."/>
            <person name="Larimer F."/>
            <person name="Land M."/>
            <person name="Hauser L."/>
            <person name="Kyrpides N."/>
            <person name="Mikhailova N."/>
            <person name="Viollier P."/>
            <person name="Stephens C."/>
            <person name="Richardson P."/>
        </authorList>
    </citation>
    <scope>NUCLEOTIDE SEQUENCE [LARGE SCALE GENOMIC DNA]</scope>
    <source>
        <strain>MCS10</strain>
    </source>
</reference>
<keyword id="KW-0028">Amino-acid biosynthesis</keyword>
<keyword id="KW-0055">Arginine biosynthesis</keyword>
<keyword id="KW-0067">ATP-binding</keyword>
<keyword id="KW-0315">Glutamine amidotransferase</keyword>
<keyword id="KW-0436">Ligase</keyword>
<keyword id="KW-0547">Nucleotide-binding</keyword>
<keyword id="KW-0665">Pyrimidine biosynthesis</keyword>
<keyword id="KW-1185">Reference proteome</keyword>
<name>CARA_MARMM</name>